<sequence>MAKNKGLGRGLSSLLGEEVISIESEIVQIINIDKIRPNENQPRKNFEYDKIKELADSILNNGLLQPIIVDNNFQIIAGERRWRACKLAKVLEIPVIIKNLDARESMEIALIENIQRTDLTVMEEARGFKYLIENFNYTAEKLAERLGKSRSHIANLLRLNNLPQSIQDKVNENILSMGQARCLINHEHAEVIADYIINNDLNVRQTEELVRQWYKNEYTKSPNNNNKIGKRFLKDNATDNDLELLVKALSEKFGIKITIENYPLGGKLIFHYKDLEELDLILLKLN</sequence>
<accession>Q92JI0</accession>
<dbReference type="EMBL" id="AE006914">
    <property type="protein sequence ID" value="AAL02625.1"/>
    <property type="molecule type" value="Genomic_DNA"/>
</dbReference>
<dbReference type="PIR" id="G97710">
    <property type="entry name" value="G97710"/>
</dbReference>
<dbReference type="RefSeq" id="WP_010976771.1">
    <property type="nucleotide sequence ID" value="NC_003103.1"/>
</dbReference>
<dbReference type="SMR" id="Q92JI0"/>
<dbReference type="GeneID" id="928222"/>
<dbReference type="KEGG" id="rco:RC0087"/>
<dbReference type="PATRIC" id="fig|272944.4.peg.104"/>
<dbReference type="HOGENOM" id="CLU_023853_0_0_5"/>
<dbReference type="Proteomes" id="UP000000816">
    <property type="component" value="Chromosome"/>
</dbReference>
<dbReference type="GO" id="GO:0005694">
    <property type="term" value="C:chromosome"/>
    <property type="evidence" value="ECO:0007669"/>
    <property type="project" value="TreeGrafter"/>
</dbReference>
<dbReference type="GO" id="GO:0003677">
    <property type="term" value="F:DNA binding"/>
    <property type="evidence" value="ECO:0007669"/>
    <property type="project" value="UniProtKB-KW"/>
</dbReference>
<dbReference type="GO" id="GO:0007059">
    <property type="term" value="P:chromosome segregation"/>
    <property type="evidence" value="ECO:0007669"/>
    <property type="project" value="UniProtKB-KW"/>
</dbReference>
<dbReference type="GO" id="GO:0045881">
    <property type="term" value="P:positive regulation of sporulation resulting in formation of a cellular spore"/>
    <property type="evidence" value="ECO:0007669"/>
    <property type="project" value="TreeGrafter"/>
</dbReference>
<dbReference type="CDD" id="cd16393">
    <property type="entry name" value="SPO0J_N"/>
    <property type="match status" value="1"/>
</dbReference>
<dbReference type="FunFam" id="1.10.10.2830:FF:000001">
    <property type="entry name" value="Chromosome partitioning protein ParB"/>
    <property type="match status" value="1"/>
</dbReference>
<dbReference type="FunFam" id="3.90.1530.30:FF:000001">
    <property type="entry name" value="Chromosome partitioning protein ParB"/>
    <property type="match status" value="1"/>
</dbReference>
<dbReference type="Gene3D" id="1.10.10.2830">
    <property type="match status" value="1"/>
</dbReference>
<dbReference type="Gene3D" id="3.90.1530.30">
    <property type="match status" value="1"/>
</dbReference>
<dbReference type="InterPro" id="IPR050336">
    <property type="entry name" value="Chromosome_partition/occlusion"/>
</dbReference>
<dbReference type="InterPro" id="IPR041468">
    <property type="entry name" value="HTH_ParB/Spo0J"/>
</dbReference>
<dbReference type="InterPro" id="IPR004437">
    <property type="entry name" value="ParB/RepB/Spo0J"/>
</dbReference>
<dbReference type="InterPro" id="IPR003115">
    <property type="entry name" value="ParB/Sulfiredoxin_dom"/>
</dbReference>
<dbReference type="InterPro" id="IPR036086">
    <property type="entry name" value="ParB/Sulfiredoxin_sf"/>
</dbReference>
<dbReference type="InterPro" id="IPR057240">
    <property type="entry name" value="ParB_dimer_C"/>
</dbReference>
<dbReference type="NCBIfam" id="TIGR00180">
    <property type="entry name" value="parB_part"/>
    <property type="match status" value="1"/>
</dbReference>
<dbReference type="PANTHER" id="PTHR33375">
    <property type="entry name" value="CHROMOSOME-PARTITIONING PROTEIN PARB-RELATED"/>
    <property type="match status" value="1"/>
</dbReference>
<dbReference type="PANTHER" id="PTHR33375:SF1">
    <property type="entry name" value="CHROMOSOME-PARTITIONING PROTEIN PARB-RELATED"/>
    <property type="match status" value="1"/>
</dbReference>
<dbReference type="Pfam" id="PF17762">
    <property type="entry name" value="HTH_ParB"/>
    <property type="match status" value="1"/>
</dbReference>
<dbReference type="Pfam" id="PF23552">
    <property type="entry name" value="ParB_dimer"/>
    <property type="match status" value="1"/>
</dbReference>
<dbReference type="Pfam" id="PF02195">
    <property type="entry name" value="ParBc"/>
    <property type="match status" value="1"/>
</dbReference>
<dbReference type="SMART" id="SM00470">
    <property type="entry name" value="ParB"/>
    <property type="match status" value="1"/>
</dbReference>
<dbReference type="SUPFAM" id="SSF109709">
    <property type="entry name" value="KorB DNA-binding domain-like"/>
    <property type="match status" value="1"/>
</dbReference>
<dbReference type="SUPFAM" id="SSF110849">
    <property type="entry name" value="ParB/Sulfiredoxin"/>
    <property type="match status" value="1"/>
</dbReference>
<feature type="chain" id="PRO_0000291837" description="Probable chromosome-partitioning protein ParB">
    <location>
        <begin position="1"/>
        <end position="286"/>
    </location>
</feature>
<reference key="1">
    <citation type="journal article" date="2001" name="Science">
        <title>Mechanisms of evolution in Rickettsia conorii and R. prowazekii.</title>
        <authorList>
            <person name="Ogata H."/>
            <person name="Audic S."/>
            <person name="Renesto-Audiffren P."/>
            <person name="Fournier P.-E."/>
            <person name="Barbe V."/>
            <person name="Samson D."/>
            <person name="Roux V."/>
            <person name="Cossart P."/>
            <person name="Weissenbach J."/>
            <person name="Claverie J.-M."/>
            <person name="Raoult D."/>
        </authorList>
    </citation>
    <scope>NUCLEOTIDE SEQUENCE [LARGE SCALE GENOMIC DNA]</scope>
    <source>
        <strain>ATCC VR-613 / Malish 7</strain>
    </source>
</reference>
<comment type="function">
    <text evidence="1">Involved in chromosome partition. Localize to both poles of the predivisional cell following completion of DNA replication. Binds to the DNA origin of replication (By similarity).</text>
</comment>
<comment type="similarity">
    <text evidence="2">Belongs to the ParB family.</text>
</comment>
<organism>
    <name type="scientific">Rickettsia conorii (strain ATCC VR-613 / Malish 7)</name>
    <dbReference type="NCBI Taxonomy" id="272944"/>
    <lineage>
        <taxon>Bacteria</taxon>
        <taxon>Pseudomonadati</taxon>
        <taxon>Pseudomonadota</taxon>
        <taxon>Alphaproteobacteria</taxon>
        <taxon>Rickettsiales</taxon>
        <taxon>Rickettsiaceae</taxon>
        <taxon>Rickettsieae</taxon>
        <taxon>Rickettsia</taxon>
        <taxon>spotted fever group</taxon>
    </lineage>
</organism>
<keyword id="KW-0159">Chromosome partition</keyword>
<keyword id="KW-0238">DNA-binding</keyword>
<protein>
    <recommendedName>
        <fullName>Probable chromosome-partitioning protein ParB</fullName>
    </recommendedName>
</protein>
<evidence type="ECO:0000250" key="1"/>
<evidence type="ECO:0000305" key="2"/>
<proteinExistence type="inferred from homology"/>
<gene>
    <name type="primary">parB</name>
    <name type="ordered locus">RC0087</name>
</gene>
<name>PARB_RICCN</name>